<dbReference type="EMBL" id="CP001172">
    <property type="protein sequence ID" value="ACJ57584.1"/>
    <property type="molecule type" value="Genomic_DNA"/>
</dbReference>
<dbReference type="RefSeq" id="WP_000291731.1">
    <property type="nucleotide sequence ID" value="NZ_CP001172.1"/>
</dbReference>
<dbReference type="SMR" id="B7H0W5"/>
<dbReference type="HOGENOM" id="CLU_114342_3_3_6"/>
<dbReference type="Proteomes" id="UP000006924">
    <property type="component" value="Chromosome"/>
</dbReference>
<dbReference type="GO" id="GO:0005886">
    <property type="term" value="C:plasma membrane"/>
    <property type="evidence" value="ECO:0007669"/>
    <property type="project" value="UniProtKB-SubCell"/>
</dbReference>
<dbReference type="GO" id="GO:0062054">
    <property type="term" value="F:fluoride channel activity"/>
    <property type="evidence" value="ECO:0007669"/>
    <property type="project" value="UniProtKB-UniRule"/>
</dbReference>
<dbReference type="GO" id="GO:0046872">
    <property type="term" value="F:metal ion binding"/>
    <property type="evidence" value="ECO:0007669"/>
    <property type="project" value="UniProtKB-KW"/>
</dbReference>
<dbReference type="GO" id="GO:0140114">
    <property type="term" value="P:cellular detoxification of fluoride"/>
    <property type="evidence" value="ECO:0007669"/>
    <property type="project" value="UniProtKB-UniRule"/>
</dbReference>
<dbReference type="HAMAP" id="MF_00454">
    <property type="entry name" value="FluC"/>
    <property type="match status" value="1"/>
</dbReference>
<dbReference type="InterPro" id="IPR003691">
    <property type="entry name" value="FluC"/>
</dbReference>
<dbReference type="NCBIfam" id="TIGR00494">
    <property type="entry name" value="crcB"/>
    <property type="match status" value="1"/>
</dbReference>
<dbReference type="NCBIfam" id="NF010792">
    <property type="entry name" value="PRK14196.1"/>
    <property type="match status" value="1"/>
</dbReference>
<dbReference type="PANTHER" id="PTHR28259">
    <property type="entry name" value="FLUORIDE EXPORT PROTEIN 1-RELATED"/>
    <property type="match status" value="1"/>
</dbReference>
<dbReference type="PANTHER" id="PTHR28259:SF1">
    <property type="entry name" value="FLUORIDE EXPORT PROTEIN 1-RELATED"/>
    <property type="match status" value="1"/>
</dbReference>
<dbReference type="Pfam" id="PF02537">
    <property type="entry name" value="CRCB"/>
    <property type="match status" value="1"/>
</dbReference>
<feature type="chain" id="PRO_1000189701" description="Fluoride-specific ion channel FluC">
    <location>
        <begin position="1"/>
        <end position="126"/>
    </location>
</feature>
<feature type="transmembrane region" description="Helical" evidence="1">
    <location>
        <begin position="4"/>
        <end position="24"/>
    </location>
</feature>
<feature type="transmembrane region" description="Helical" evidence="1">
    <location>
        <begin position="33"/>
        <end position="53"/>
    </location>
</feature>
<feature type="transmembrane region" description="Helical" evidence="1">
    <location>
        <begin position="67"/>
        <end position="87"/>
    </location>
</feature>
<feature type="transmembrane region" description="Helical" evidence="1">
    <location>
        <begin position="97"/>
        <end position="117"/>
    </location>
</feature>
<feature type="binding site" evidence="1">
    <location>
        <position position="74"/>
    </location>
    <ligand>
        <name>Na(+)</name>
        <dbReference type="ChEBI" id="CHEBI:29101"/>
        <note>structural</note>
    </ligand>
</feature>
<feature type="binding site" evidence="1">
    <location>
        <position position="77"/>
    </location>
    <ligand>
        <name>Na(+)</name>
        <dbReference type="ChEBI" id="CHEBI:29101"/>
        <note>structural</note>
    </ligand>
</feature>
<organism>
    <name type="scientific">Acinetobacter baumannii (strain AB307-0294)</name>
    <dbReference type="NCBI Taxonomy" id="557600"/>
    <lineage>
        <taxon>Bacteria</taxon>
        <taxon>Pseudomonadati</taxon>
        <taxon>Pseudomonadota</taxon>
        <taxon>Gammaproteobacteria</taxon>
        <taxon>Moraxellales</taxon>
        <taxon>Moraxellaceae</taxon>
        <taxon>Acinetobacter</taxon>
        <taxon>Acinetobacter calcoaceticus/baumannii complex</taxon>
    </lineage>
</organism>
<accession>B7H0W5</accession>
<proteinExistence type="inferred from homology"/>
<evidence type="ECO:0000255" key="1">
    <source>
        <dbReference type="HAMAP-Rule" id="MF_00454"/>
    </source>
</evidence>
<protein>
    <recommendedName>
        <fullName evidence="1">Fluoride-specific ion channel FluC</fullName>
    </recommendedName>
</protein>
<name>FLUC_ACIB3</name>
<sequence>MYYPLLSIALGSVLGAWLRWFLGLKLNPIYPQIPLGTVTVNLVGGFIIGFAMAYFAHSDLNPNYKLFVITGFCGALTTFSTFSIEIVTLLQSGKWGMAMLAISIHLIGSLIFTCLGLATYYWVAGH</sequence>
<reference key="1">
    <citation type="journal article" date="2008" name="J. Bacteriol.">
        <title>Comparative genome sequence analysis of multidrug-resistant Acinetobacter baumannii.</title>
        <authorList>
            <person name="Adams M.D."/>
            <person name="Goglin K."/>
            <person name="Molyneaux N."/>
            <person name="Hujer K.M."/>
            <person name="Lavender H."/>
            <person name="Jamison J.J."/>
            <person name="MacDonald I.J."/>
            <person name="Martin K.M."/>
            <person name="Russo T."/>
            <person name="Campagnari A.A."/>
            <person name="Hujer A.M."/>
            <person name="Bonomo R.A."/>
            <person name="Gill S.R."/>
        </authorList>
    </citation>
    <scope>NUCLEOTIDE SEQUENCE [LARGE SCALE GENOMIC DNA]</scope>
    <source>
        <strain>AB307-0294</strain>
    </source>
</reference>
<comment type="function">
    <text evidence="1">Fluoride-specific ion channel. Important for reducing fluoride concentration in the cell, thus reducing its toxicity.</text>
</comment>
<comment type="catalytic activity">
    <reaction evidence="1">
        <text>fluoride(in) = fluoride(out)</text>
        <dbReference type="Rhea" id="RHEA:76159"/>
        <dbReference type="ChEBI" id="CHEBI:17051"/>
    </reaction>
    <physiologicalReaction direction="left-to-right" evidence="1">
        <dbReference type="Rhea" id="RHEA:76160"/>
    </physiologicalReaction>
</comment>
<comment type="activity regulation">
    <text evidence="1">Na(+) is not transported, but it plays an essential structural role and its presence is essential for fluoride channel function.</text>
</comment>
<comment type="subcellular location">
    <subcellularLocation>
        <location evidence="1">Cell inner membrane</location>
        <topology evidence="1">Multi-pass membrane protein</topology>
    </subcellularLocation>
</comment>
<comment type="similarity">
    <text evidence="1">Belongs to the fluoride channel Fluc/FEX (TC 1.A.43) family.</text>
</comment>
<keyword id="KW-0997">Cell inner membrane</keyword>
<keyword id="KW-1003">Cell membrane</keyword>
<keyword id="KW-0407">Ion channel</keyword>
<keyword id="KW-0406">Ion transport</keyword>
<keyword id="KW-0472">Membrane</keyword>
<keyword id="KW-0479">Metal-binding</keyword>
<keyword id="KW-0915">Sodium</keyword>
<keyword id="KW-0812">Transmembrane</keyword>
<keyword id="KW-1133">Transmembrane helix</keyword>
<keyword id="KW-0813">Transport</keyword>
<gene>
    <name evidence="1" type="primary">fluC</name>
    <name evidence="1" type="synonym">crcB</name>
    <name type="ordered locus">ABBFA_003149</name>
</gene>